<name>ESXE_MYCTU</name>
<sequence>MDPTVLADAVARMAEFGRHVEELVAEIESLVTRLHVTWTGEGAAAHAEAQRHWAAGEAMMRQALAQLTAAGQSAHANYTGAMATNLGMWS</sequence>
<evidence type="ECO:0000269" key="1">
    <source>
    </source>
</evidence>
<evidence type="ECO:0000303" key="2">
    <source>
    </source>
</evidence>
<evidence type="ECO:0000305" key="3"/>
<evidence type="ECO:0000305" key="4">
    <source>
    </source>
</evidence>
<organism>
    <name type="scientific">Mycobacterium tuberculosis (strain ATCC 25618 / H37Rv)</name>
    <dbReference type="NCBI Taxonomy" id="83332"/>
    <lineage>
        <taxon>Bacteria</taxon>
        <taxon>Bacillati</taxon>
        <taxon>Actinomycetota</taxon>
        <taxon>Actinomycetes</taxon>
        <taxon>Mycobacteriales</taxon>
        <taxon>Mycobacteriaceae</taxon>
        <taxon>Mycobacterium</taxon>
        <taxon>Mycobacterium tuberculosis complex</taxon>
    </lineage>
</organism>
<feature type="chain" id="PRO_0000167819" description="ESAT-6-like protein EsxE">
    <location>
        <begin position="1"/>
        <end position="90"/>
    </location>
</feature>
<keyword id="KW-1185">Reference proteome</keyword>
<keyword id="KW-0964">Secreted</keyword>
<protein>
    <recommendedName>
        <fullName evidence="3">ESAT-6-like protein EsxE</fullName>
    </recommendedName>
</protein>
<dbReference type="EMBL" id="AL123456">
    <property type="protein sequence ID" value="CCP46733.1"/>
    <property type="molecule type" value="Genomic_DNA"/>
</dbReference>
<dbReference type="PIR" id="A70600">
    <property type="entry name" value="A70600"/>
</dbReference>
<dbReference type="RefSeq" id="NP_218421.1">
    <property type="nucleotide sequence ID" value="NC_000962.3"/>
</dbReference>
<dbReference type="RefSeq" id="WP_003400094.1">
    <property type="nucleotide sequence ID" value="NZ_NVQJ01000005.1"/>
</dbReference>
<dbReference type="SMR" id="P9WNH9"/>
<dbReference type="STRING" id="83332.Rv3904c"/>
<dbReference type="PaxDb" id="83332-Rv3904c"/>
<dbReference type="DNASU" id="886237"/>
<dbReference type="GeneID" id="45427904"/>
<dbReference type="GeneID" id="886237"/>
<dbReference type="KEGG" id="mtu:Rv3904c"/>
<dbReference type="KEGG" id="mtv:RVBD_3904c"/>
<dbReference type="PATRIC" id="fig|83332.111.peg.4348"/>
<dbReference type="TubercuList" id="Rv3904c"/>
<dbReference type="eggNOG" id="COG4842">
    <property type="taxonomic scope" value="Bacteria"/>
</dbReference>
<dbReference type="InParanoid" id="P9WNH9"/>
<dbReference type="OrthoDB" id="4748308at2"/>
<dbReference type="Proteomes" id="UP000001584">
    <property type="component" value="Chromosome"/>
</dbReference>
<dbReference type="GO" id="GO:0005576">
    <property type="term" value="C:extracellular region"/>
    <property type="evidence" value="ECO:0007669"/>
    <property type="project" value="UniProtKB-SubCell"/>
</dbReference>
<dbReference type="Gene3D" id="1.10.287.1060">
    <property type="entry name" value="ESAT-6-like"/>
    <property type="match status" value="1"/>
</dbReference>
<dbReference type="InterPro" id="IPR036689">
    <property type="entry name" value="ESAT-6-like_sf"/>
</dbReference>
<dbReference type="InterPro" id="IPR010310">
    <property type="entry name" value="T7SS_ESAT-6-like"/>
</dbReference>
<dbReference type="Pfam" id="PF06013">
    <property type="entry name" value="WXG100"/>
    <property type="match status" value="1"/>
</dbReference>
<dbReference type="SUPFAM" id="SSF140453">
    <property type="entry name" value="EsxAB dimer-like"/>
    <property type="match status" value="1"/>
</dbReference>
<gene>
    <name evidence="2" type="primary">esxE</name>
    <name type="ordered locus">Rv3904c</name>
    <name type="ORF">MTCY15F10.07</name>
</gene>
<proteinExistence type="evidence at protein level"/>
<reference key="1">
    <citation type="journal article" date="1998" name="Nature">
        <title>Deciphering the biology of Mycobacterium tuberculosis from the complete genome sequence.</title>
        <authorList>
            <person name="Cole S.T."/>
            <person name="Brosch R."/>
            <person name="Parkhill J."/>
            <person name="Garnier T."/>
            <person name="Churcher C.M."/>
            <person name="Harris D.E."/>
            <person name="Gordon S.V."/>
            <person name="Eiglmeier K."/>
            <person name="Gas S."/>
            <person name="Barry C.E. III"/>
            <person name="Tekaia F."/>
            <person name="Badcock K."/>
            <person name="Basham D."/>
            <person name="Brown D."/>
            <person name="Chillingworth T."/>
            <person name="Connor R."/>
            <person name="Davies R.M."/>
            <person name="Devlin K."/>
            <person name="Feltwell T."/>
            <person name="Gentles S."/>
            <person name="Hamlin N."/>
            <person name="Holroyd S."/>
            <person name="Hornsby T."/>
            <person name="Jagels K."/>
            <person name="Krogh A."/>
            <person name="McLean J."/>
            <person name="Moule S."/>
            <person name="Murphy L.D."/>
            <person name="Oliver S."/>
            <person name="Osborne J."/>
            <person name="Quail M.A."/>
            <person name="Rajandream M.A."/>
            <person name="Rogers J."/>
            <person name="Rutter S."/>
            <person name="Seeger K."/>
            <person name="Skelton S."/>
            <person name="Squares S."/>
            <person name="Squares R."/>
            <person name="Sulston J.E."/>
            <person name="Taylor K."/>
            <person name="Whitehead S."/>
            <person name="Barrell B.G."/>
        </authorList>
    </citation>
    <scope>NUCLEOTIDE SEQUENCE [LARGE SCALE GENOMIC DNA]</scope>
    <source>
        <strain>ATCC 25618 / H37Rv</strain>
    </source>
</reference>
<reference key="2">
    <citation type="journal article" date="2009" name="PLoS Pathog.">
        <title>Systematic genetic nomenclature for type VII secretion systems.</title>
        <authorList>
            <person name="Bitter W."/>
            <person name="Houben E.N."/>
            <person name="Bottai D."/>
            <person name="Brodin P."/>
            <person name="Brown E.J."/>
            <person name="Cox J.S."/>
            <person name="Derbyshire K."/>
            <person name="Fortune S.M."/>
            <person name="Gao L.Y."/>
            <person name="Liu J."/>
            <person name="Gey van Pittius N.C."/>
            <person name="Pym A.S."/>
            <person name="Rubin E.J."/>
            <person name="Sherman D.R."/>
            <person name="Cole S.T."/>
            <person name="Brosch R."/>
        </authorList>
    </citation>
    <scope>NOMENCLATURE</scope>
</reference>
<reference key="3">
    <citation type="journal article" date="2010" name="FEBS Lett.">
        <title>Stoichiometric protein complex formation and over-expression using the prokaryotic native operon structure.</title>
        <authorList>
            <person name="Poulsen C."/>
            <person name="Holton S."/>
            <person name="Geerlof A."/>
            <person name="Wilmanns M."/>
            <person name="Song Y.H."/>
        </authorList>
    </citation>
    <scope>SUBUNIT</scope>
    <source>
        <strain>ATCC 25618 / H37Rv</strain>
    </source>
</reference>
<accession>P9WNH9</accession>
<accession>L0TDW8</accession>
<accession>O05441</accession>
<comment type="subunit">
    <text evidence="1">Forms a tight 1:1 complex with EsxF (PubMed:20085764).</text>
</comment>
<comment type="subcellular location">
    <subcellularLocation>
        <location evidence="4">Secreted</location>
    </subcellularLocation>
    <text evidence="4">Probably secreted via the ESX / type VII secretion system (T7SS).</text>
</comment>
<comment type="similarity">
    <text evidence="4">Belongs to the WXG100 family. ESAT-6 subfamily.</text>
</comment>